<proteinExistence type="inferred from homology"/>
<name>DNLJ_PSET1</name>
<gene>
    <name evidence="1" type="primary">ligA</name>
    <name type="ordered locus">PSHAa1083</name>
</gene>
<comment type="function">
    <text evidence="1">DNA ligase that catalyzes the formation of phosphodiester linkages between 5'-phosphoryl and 3'-hydroxyl groups in double-stranded DNA using NAD as a coenzyme and as the energy source for the reaction. It is essential for DNA replication and repair of damaged DNA.</text>
</comment>
<comment type="catalytic activity">
    <reaction evidence="1">
        <text>NAD(+) + (deoxyribonucleotide)n-3'-hydroxyl + 5'-phospho-(deoxyribonucleotide)m = (deoxyribonucleotide)n+m + AMP + beta-nicotinamide D-nucleotide.</text>
        <dbReference type="EC" id="6.5.1.2"/>
    </reaction>
</comment>
<comment type="cofactor">
    <cofactor evidence="1">
        <name>Mg(2+)</name>
        <dbReference type="ChEBI" id="CHEBI:18420"/>
    </cofactor>
    <cofactor evidence="1">
        <name>Mn(2+)</name>
        <dbReference type="ChEBI" id="CHEBI:29035"/>
    </cofactor>
</comment>
<comment type="similarity">
    <text evidence="1">Belongs to the NAD-dependent DNA ligase family. LigA subfamily.</text>
</comment>
<organism>
    <name type="scientific">Pseudoalteromonas translucida (strain TAC 125)</name>
    <dbReference type="NCBI Taxonomy" id="326442"/>
    <lineage>
        <taxon>Bacteria</taxon>
        <taxon>Pseudomonadati</taxon>
        <taxon>Pseudomonadota</taxon>
        <taxon>Gammaproteobacteria</taxon>
        <taxon>Alteromonadales</taxon>
        <taxon>Pseudoalteromonadaceae</taxon>
        <taxon>Pseudoalteromonas</taxon>
    </lineage>
</organism>
<feature type="chain" id="PRO_0000313372" description="DNA ligase">
    <location>
        <begin position="1"/>
        <end position="673"/>
    </location>
</feature>
<feature type="domain" description="BRCT" evidence="1">
    <location>
        <begin position="592"/>
        <end position="673"/>
    </location>
</feature>
<feature type="active site" description="N6-AMP-lysine intermediate" evidence="1">
    <location>
        <position position="116"/>
    </location>
</feature>
<feature type="binding site" evidence="1">
    <location>
        <begin position="33"/>
        <end position="37"/>
    </location>
    <ligand>
        <name>NAD(+)</name>
        <dbReference type="ChEBI" id="CHEBI:57540"/>
    </ligand>
</feature>
<feature type="binding site" evidence="1">
    <location>
        <begin position="82"/>
        <end position="83"/>
    </location>
    <ligand>
        <name>NAD(+)</name>
        <dbReference type="ChEBI" id="CHEBI:57540"/>
    </ligand>
</feature>
<feature type="binding site" evidence="1">
    <location>
        <position position="114"/>
    </location>
    <ligand>
        <name>NAD(+)</name>
        <dbReference type="ChEBI" id="CHEBI:57540"/>
    </ligand>
</feature>
<feature type="binding site" evidence="1">
    <location>
        <position position="137"/>
    </location>
    <ligand>
        <name>NAD(+)</name>
        <dbReference type="ChEBI" id="CHEBI:57540"/>
    </ligand>
</feature>
<feature type="binding site" evidence="1">
    <location>
        <position position="174"/>
    </location>
    <ligand>
        <name>NAD(+)</name>
        <dbReference type="ChEBI" id="CHEBI:57540"/>
    </ligand>
</feature>
<feature type="binding site" evidence="1">
    <location>
        <position position="291"/>
    </location>
    <ligand>
        <name>NAD(+)</name>
        <dbReference type="ChEBI" id="CHEBI:57540"/>
    </ligand>
</feature>
<feature type="binding site" evidence="1">
    <location>
        <position position="315"/>
    </location>
    <ligand>
        <name>NAD(+)</name>
        <dbReference type="ChEBI" id="CHEBI:57540"/>
    </ligand>
</feature>
<feature type="binding site" evidence="1">
    <location>
        <position position="409"/>
    </location>
    <ligand>
        <name>Zn(2+)</name>
        <dbReference type="ChEBI" id="CHEBI:29105"/>
    </ligand>
</feature>
<feature type="binding site" evidence="1">
    <location>
        <position position="412"/>
    </location>
    <ligand>
        <name>Zn(2+)</name>
        <dbReference type="ChEBI" id="CHEBI:29105"/>
    </ligand>
</feature>
<feature type="binding site" evidence="1">
    <location>
        <position position="427"/>
    </location>
    <ligand>
        <name>Zn(2+)</name>
        <dbReference type="ChEBI" id="CHEBI:29105"/>
    </ligand>
</feature>
<feature type="binding site" evidence="1">
    <location>
        <position position="433"/>
    </location>
    <ligand>
        <name>Zn(2+)</name>
        <dbReference type="ChEBI" id="CHEBI:29105"/>
    </ligand>
</feature>
<accession>Q3IKB8</accession>
<sequence length="673" mass="73856">MASSISEQINHLRSTLEQHSYNYYVLDTPSIPDAEYDRLLQQLSALETQHPELITADSPTQKVGGAALSKFEQVAHQVPMLSLDNAFSEDEFIAFNRRIKERLMSTEELTFCCEPKLDGLAVSIIYRDGVLVQAATRGDGLTGENVTQNVKTIRNVPLKLRGSDYPAELEVRGEVFMDNAGFEKFNIEAEKRGEKVFVNPRNAAAGSLRQLDSKITAKRPLMFYAYSTGLVADGSIAEDHYQQLEKLTDWGLPLCPETKLVEGPQAALAYYTDILTRRGELKYEIDGVVIKINQKALQERLGFVARAPRWAIAYKFPAQEEITKLLDVEFQVGRTGAITPVARLEPVFVGGVTVSNATLHNGDEIARLGVKVGDTVIIRRAGDVIPQITQVVLERRPDDARDIEFPVTCPICDSHVEKVEGEAVARCTGGLVCPAQRKQAIKHFASRKALDIDGLGDKIVDQLVDRELIKTPADLFILKQGHFESLERMGPKSAKNLVTALQDAKATTLAKFLYSLGIREAGEATTQNLANHFLTLENVINASIDSLTQVSDVGEIVATHVRSFFAEQHNLDVVNALVEQGINWPELTPPSAQEQPLAGLVYVLTGTLNTLNRNDAKARLQQLGAKVSGSVSAKTDALVAGEKAGSKLTKAQDLGIDVLTEEDLINLLEQHNG</sequence>
<reference key="1">
    <citation type="journal article" date="2005" name="Genome Res.">
        <title>Coping with cold: the genome of the versatile marine Antarctica bacterium Pseudoalteromonas haloplanktis TAC125.</title>
        <authorList>
            <person name="Medigue C."/>
            <person name="Krin E."/>
            <person name="Pascal G."/>
            <person name="Barbe V."/>
            <person name="Bernsel A."/>
            <person name="Bertin P.N."/>
            <person name="Cheung F."/>
            <person name="Cruveiller S."/>
            <person name="D'Amico S."/>
            <person name="Duilio A."/>
            <person name="Fang G."/>
            <person name="Feller G."/>
            <person name="Ho C."/>
            <person name="Mangenot S."/>
            <person name="Marino G."/>
            <person name="Nilsson J."/>
            <person name="Parrilli E."/>
            <person name="Rocha E.P.C."/>
            <person name="Rouy Z."/>
            <person name="Sekowska A."/>
            <person name="Tutino M.L."/>
            <person name="Vallenet D."/>
            <person name="von Heijne G."/>
            <person name="Danchin A."/>
        </authorList>
    </citation>
    <scope>NUCLEOTIDE SEQUENCE [LARGE SCALE GENOMIC DNA]</scope>
    <source>
        <strain>TAC 125</strain>
    </source>
</reference>
<keyword id="KW-0227">DNA damage</keyword>
<keyword id="KW-0234">DNA repair</keyword>
<keyword id="KW-0235">DNA replication</keyword>
<keyword id="KW-0436">Ligase</keyword>
<keyword id="KW-0460">Magnesium</keyword>
<keyword id="KW-0464">Manganese</keyword>
<keyword id="KW-0479">Metal-binding</keyword>
<keyword id="KW-0520">NAD</keyword>
<keyword id="KW-1185">Reference proteome</keyword>
<keyword id="KW-0862">Zinc</keyword>
<dbReference type="EC" id="6.5.1.2" evidence="1"/>
<dbReference type="EMBL" id="CR954246">
    <property type="protein sequence ID" value="CAI86158.1"/>
    <property type="molecule type" value="Genomic_DNA"/>
</dbReference>
<dbReference type="SMR" id="Q3IKB8"/>
<dbReference type="STRING" id="326442.PSHAa1083"/>
<dbReference type="KEGG" id="pha:PSHAa1083"/>
<dbReference type="PATRIC" id="fig|326442.8.peg.1042"/>
<dbReference type="eggNOG" id="COG0272">
    <property type="taxonomic scope" value="Bacteria"/>
</dbReference>
<dbReference type="HOGENOM" id="CLU_007764_2_1_6"/>
<dbReference type="BioCyc" id="PHAL326442:PSHA_RS05320-MONOMER"/>
<dbReference type="Proteomes" id="UP000006843">
    <property type="component" value="Chromosome I"/>
</dbReference>
<dbReference type="GO" id="GO:0005829">
    <property type="term" value="C:cytosol"/>
    <property type="evidence" value="ECO:0007669"/>
    <property type="project" value="TreeGrafter"/>
</dbReference>
<dbReference type="GO" id="GO:0003911">
    <property type="term" value="F:DNA ligase (NAD+) activity"/>
    <property type="evidence" value="ECO:0007669"/>
    <property type="project" value="UniProtKB-UniRule"/>
</dbReference>
<dbReference type="GO" id="GO:0046872">
    <property type="term" value="F:metal ion binding"/>
    <property type="evidence" value="ECO:0007669"/>
    <property type="project" value="UniProtKB-KW"/>
</dbReference>
<dbReference type="GO" id="GO:0006281">
    <property type="term" value="P:DNA repair"/>
    <property type="evidence" value="ECO:0007669"/>
    <property type="project" value="UniProtKB-KW"/>
</dbReference>
<dbReference type="GO" id="GO:0006260">
    <property type="term" value="P:DNA replication"/>
    <property type="evidence" value="ECO:0007669"/>
    <property type="project" value="UniProtKB-KW"/>
</dbReference>
<dbReference type="CDD" id="cd17748">
    <property type="entry name" value="BRCT_DNA_ligase_like"/>
    <property type="match status" value="1"/>
</dbReference>
<dbReference type="CDD" id="cd00114">
    <property type="entry name" value="LIGANc"/>
    <property type="match status" value="1"/>
</dbReference>
<dbReference type="FunFam" id="1.10.150.20:FF:000006">
    <property type="entry name" value="DNA ligase"/>
    <property type="match status" value="1"/>
</dbReference>
<dbReference type="FunFam" id="1.10.150.20:FF:000007">
    <property type="entry name" value="DNA ligase"/>
    <property type="match status" value="1"/>
</dbReference>
<dbReference type="FunFam" id="1.10.287.610:FF:000002">
    <property type="entry name" value="DNA ligase"/>
    <property type="match status" value="1"/>
</dbReference>
<dbReference type="FunFam" id="2.40.50.140:FF:000012">
    <property type="entry name" value="DNA ligase"/>
    <property type="match status" value="1"/>
</dbReference>
<dbReference type="FunFam" id="3.30.470.30:FF:000001">
    <property type="entry name" value="DNA ligase"/>
    <property type="match status" value="1"/>
</dbReference>
<dbReference type="FunFam" id="6.20.10.30:FF:000001">
    <property type="entry name" value="DNA ligase"/>
    <property type="match status" value="1"/>
</dbReference>
<dbReference type="Gene3D" id="6.20.10.30">
    <property type="match status" value="1"/>
</dbReference>
<dbReference type="Gene3D" id="1.10.150.20">
    <property type="entry name" value="5' to 3' exonuclease, C-terminal subdomain"/>
    <property type="match status" value="2"/>
</dbReference>
<dbReference type="Gene3D" id="3.40.50.10190">
    <property type="entry name" value="BRCT domain"/>
    <property type="match status" value="1"/>
</dbReference>
<dbReference type="Gene3D" id="3.30.470.30">
    <property type="entry name" value="DNA ligase/mRNA capping enzyme"/>
    <property type="match status" value="1"/>
</dbReference>
<dbReference type="Gene3D" id="1.10.287.610">
    <property type="entry name" value="Helix hairpin bin"/>
    <property type="match status" value="1"/>
</dbReference>
<dbReference type="Gene3D" id="2.40.50.140">
    <property type="entry name" value="Nucleic acid-binding proteins"/>
    <property type="match status" value="1"/>
</dbReference>
<dbReference type="HAMAP" id="MF_01588">
    <property type="entry name" value="DNA_ligase_A"/>
    <property type="match status" value="1"/>
</dbReference>
<dbReference type="InterPro" id="IPR001357">
    <property type="entry name" value="BRCT_dom"/>
</dbReference>
<dbReference type="InterPro" id="IPR036420">
    <property type="entry name" value="BRCT_dom_sf"/>
</dbReference>
<dbReference type="InterPro" id="IPR041663">
    <property type="entry name" value="DisA/LigA_HHH"/>
</dbReference>
<dbReference type="InterPro" id="IPR001679">
    <property type="entry name" value="DNA_ligase"/>
</dbReference>
<dbReference type="InterPro" id="IPR018239">
    <property type="entry name" value="DNA_ligase_AS"/>
</dbReference>
<dbReference type="InterPro" id="IPR033136">
    <property type="entry name" value="DNA_ligase_CS"/>
</dbReference>
<dbReference type="InterPro" id="IPR013839">
    <property type="entry name" value="DNAligase_adenylation"/>
</dbReference>
<dbReference type="InterPro" id="IPR013840">
    <property type="entry name" value="DNAligase_N"/>
</dbReference>
<dbReference type="InterPro" id="IPR012340">
    <property type="entry name" value="NA-bd_OB-fold"/>
</dbReference>
<dbReference type="InterPro" id="IPR004150">
    <property type="entry name" value="NAD_DNA_ligase_OB"/>
</dbReference>
<dbReference type="InterPro" id="IPR010994">
    <property type="entry name" value="RuvA_2-like"/>
</dbReference>
<dbReference type="InterPro" id="IPR004149">
    <property type="entry name" value="Znf_DNAligase_C4"/>
</dbReference>
<dbReference type="NCBIfam" id="TIGR00575">
    <property type="entry name" value="dnlj"/>
    <property type="match status" value="1"/>
</dbReference>
<dbReference type="NCBIfam" id="NF005932">
    <property type="entry name" value="PRK07956.1"/>
    <property type="match status" value="1"/>
</dbReference>
<dbReference type="PANTHER" id="PTHR23389">
    <property type="entry name" value="CHROMOSOME TRANSMISSION FIDELITY FACTOR 18"/>
    <property type="match status" value="1"/>
</dbReference>
<dbReference type="PANTHER" id="PTHR23389:SF9">
    <property type="entry name" value="DNA LIGASE"/>
    <property type="match status" value="1"/>
</dbReference>
<dbReference type="Pfam" id="PF00533">
    <property type="entry name" value="BRCT"/>
    <property type="match status" value="1"/>
</dbReference>
<dbReference type="Pfam" id="PF01653">
    <property type="entry name" value="DNA_ligase_aden"/>
    <property type="match status" value="1"/>
</dbReference>
<dbReference type="Pfam" id="PF03120">
    <property type="entry name" value="DNA_ligase_OB"/>
    <property type="match status" value="1"/>
</dbReference>
<dbReference type="Pfam" id="PF03119">
    <property type="entry name" value="DNA_ligase_ZBD"/>
    <property type="match status" value="1"/>
</dbReference>
<dbReference type="Pfam" id="PF12826">
    <property type="entry name" value="HHH_2"/>
    <property type="match status" value="1"/>
</dbReference>
<dbReference type="Pfam" id="PF14520">
    <property type="entry name" value="HHH_5"/>
    <property type="match status" value="1"/>
</dbReference>
<dbReference type="Pfam" id="PF22745">
    <property type="entry name" value="Nlig-Ia"/>
    <property type="match status" value="1"/>
</dbReference>
<dbReference type="PIRSF" id="PIRSF001604">
    <property type="entry name" value="LigA"/>
    <property type="match status" value="1"/>
</dbReference>
<dbReference type="SMART" id="SM00292">
    <property type="entry name" value="BRCT"/>
    <property type="match status" value="1"/>
</dbReference>
<dbReference type="SMART" id="SM00532">
    <property type="entry name" value="LIGANc"/>
    <property type="match status" value="1"/>
</dbReference>
<dbReference type="SUPFAM" id="SSF52113">
    <property type="entry name" value="BRCT domain"/>
    <property type="match status" value="1"/>
</dbReference>
<dbReference type="SUPFAM" id="SSF56091">
    <property type="entry name" value="DNA ligase/mRNA capping enzyme, catalytic domain"/>
    <property type="match status" value="1"/>
</dbReference>
<dbReference type="SUPFAM" id="SSF50249">
    <property type="entry name" value="Nucleic acid-binding proteins"/>
    <property type="match status" value="1"/>
</dbReference>
<dbReference type="SUPFAM" id="SSF47781">
    <property type="entry name" value="RuvA domain 2-like"/>
    <property type="match status" value="1"/>
</dbReference>
<dbReference type="PROSITE" id="PS50172">
    <property type="entry name" value="BRCT"/>
    <property type="match status" value="1"/>
</dbReference>
<dbReference type="PROSITE" id="PS01055">
    <property type="entry name" value="DNA_LIGASE_N1"/>
    <property type="match status" value="1"/>
</dbReference>
<dbReference type="PROSITE" id="PS01056">
    <property type="entry name" value="DNA_LIGASE_N2"/>
    <property type="match status" value="1"/>
</dbReference>
<evidence type="ECO:0000255" key="1">
    <source>
        <dbReference type="HAMAP-Rule" id="MF_01588"/>
    </source>
</evidence>
<protein>
    <recommendedName>
        <fullName evidence="1">DNA ligase</fullName>
        <ecNumber evidence="1">6.5.1.2</ecNumber>
    </recommendedName>
    <alternativeName>
        <fullName evidence="1">Polydeoxyribonucleotide synthase [NAD(+)]</fullName>
    </alternativeName>
</protein>